<gene>
    <name evidence="1" type="primary">surE2</name>
    <name type="ordered locus">CCA_00519</name>
</gene>
<keyword id="KW-0963">Cytoplasm</keyword>
<keyword id="KW-0378">Hydrolase</keyword>
<keyword id="KW-0479">Metal-binding</keyword>
<keyword id="KW-0547">Nucleotide-binding</keyword>
<reference key="1">
    <citation type="journal article" date="2003" name="Nucleic Acids Res.">
        <title>Genome sequence of Chlamydophila caviae (Chlamydia psittaci GPIC): examining the role of niche-specific genes in the evolution of the Chlamydiaceae.</title>
        <authorList>
            <person name="Read T.D."/>
            <person name="Myers G.S.A."/>
            <person name="Brunham R.C."/>
            <person name="Nelson W.C."/>
            <person name="Paulsen I.T."/>
            <person name="Heidelberg J.F."/>
            <person name="Holtzapple E.K."/>
            <person name="Khouri H.M."/>
            <person name="Federova N.B."/>
            <person name="Carty H.A."/>
            <person name="Umayam L.A."/>
            <person name="Haft D.H."/>
            <person name="Peterson J.D."/>
            <person name="Beanan M.J."/>
            <person name="White O."/>
            <person name="Salzberg S.L."/>
            <person name="Hsia R.-C."/>
            <person name="McClarty G."/>
            <person name="Rank R.G."/>
            <person name="Bavoil P.M."/>
            <person name="Fraser C.M."/>
        </authorList>
    </citation>
    <scope>NUCLEOTIDE SEQUENCE [LARGE SCALE GENOMIC DNA]</scope>
    <source>
        <strain>ATCC VR-813 / DSM 19441 / 03DC25 / GPIC</strain>
    </source>
</reference>
<accession>Q823A7</accession>
<evidence type="ECO:0000255" key="1">
    <source>
        <dbReference type="HAMAP-Rule" id="MF_00060"/>
    </source>
</evidence>
<evidence type="ECO:0000305" key="2"/>
<organism>
    <name type="scientific">Chlamydia caviae (strain ATCC VR-813 / DSM 19441 / 03DC25 / GPIC)</name>
    <name type="common">Chlamydophila caviae</name>
    <dbReference type="NCBI Taxonomy" id="227941"/>
    <lineage>
        <taxon>Bacteria</taxon>
        <taxon>Pseudomonadati</taxon>
        <taxon>Chlamydiota</taxon>
        <taxon>Chlamydiia</taxon>
        <taxon>Chlamydiales</taxon>
        <taxon>Chlamydiaceae</taxon>
        <taxon>Chlamydia/Chlamydophila group</taxon>
        <taxon>Chlamydia</taxon>
    </lineage>
</organism>
<feature type="chain" id="PRO_0000111800" description="5'-nucleotidase SurE 2">
    <location>
        <begin position="1"/>
        <end position="283"/>
    </location>
</feature>
<feature type="binding site" evidence="1">
    <location>
        <position position="19"/>
    </location>
    <ligand>
        <name>a divalent metal cation</name>
        <dbReference type="ChEBI" id="CHEBI:60240"/>
    </ligand>
</feature>
<feature type="binding site" evidence="1">
    <location>
        <position position="20"/>
    </location>
    <ligand>
        <name>a divalent metal cation</name>
        <dbReference type="ChEBI" id="CHEBI:60240"/>
    </ligand>
</feature>
<feature type="binding site" evidence="1">
    <location>
        <position position="52"/>
    </location>
    <ligand>
        <name>a divalent metal cation</name>
        <dbReference type="ChEBI" id="CHEBI:60240"/>
    </ligand>
</feature>
<feature type="binding site" evidence="1">
    <location>
        <position position="110"/>
    </location>
    <ligand>
        <name>a divalent metal cation</name>
        <dbReference type="ChEBI" id="CHEBI:60240"/>
    </ligand>
</feature>
<protein>
    <recommendedName>
        <fullName evidence="1">5'-nucleotidase SurE 2</fullName>
        <ecNumber evidence="1">3.1.3.5</ecNumber>
    </recommendedName>
    <alternativeName>
        <fullName evidence="1">Nucleoside 5'-monophosphate phosphohydrolase 2</fullName>
    </alternativeName>
</protein>
<comment type="function">
    <text evidence="1">Nucleotidase that shows phosphatase activity on nucleoside 5'-monophosphates.</text>
</comment>
<comment type="catalytic activity">
    <reaction evidence="1">
        <text>a ribonucleoside 5'-phosphate + H2O = a ribonucleoside + phosphate</text>
        <dbReference type="Rhea" id="RHEA:12484"/>
        <dbReference type="ChEBI" id="CHEBI:15377"/>
        <dbReference type="ChEBI" id="CHEBI:18254"/>
        <dbReference type="ChEBI" id="CHEBI:43474"/>
        <dbReference type="ChEBI" id="CHEBI:58043"/>
        <dbReference type="EC" id="3.1.3.5"/>
    </reaction>
</comment>
<comment type="cofactor">
    <cofactor evidence="1">
        <name>a divalent metal cation</name>
        <dbReference type="ChEBI" id="CHEBI:60240"/>
    </cofactor>
    <text evidence="1">Binds 1 divalent metal cation per subunit.</text>
</comment>
<comment type="subcellular location">
    <subcellularLocation>
        <location evidence="1">Cytoplasm</location>
    </subcellularLocation>
</comment>
<comment type="similarity">
    <text evidence="1">Belongs to the SurE nucleotidase family.</text>
</comment>
<comment type="sequence caution" evidence="2">
    <conflict type="erroneous initiation">
        <sequence resource="EMBL-CDS" id="AAP05262"/>
    </conflict>
</comment>
<name>SURE2_CHLCV</name>
<dbReference type="EC" id="3.1.3.5" evidence="1"/>
<dbReference type="EMBL" id="AE015925">
    <property type="protein sequence ID" value="AAP05262.1"/>
    <property type="status" value="ALT_INIT"/>
    <property type="molecule type" value="Genomic_DNA"/>
</dbReference>
<dbReference type="SMR" id="Q823A7"/>
<dbReference type="STRING" id="227941.CCA_00519"/>
<dbReference type="KEGG" id="cca:CCA_00519"/>
<dbReference type="eggNOG" id="COG0496">
    <property type="taxonomic scope" value="Bacteria"/>
</dbReference>
<dbReference type="HOGENOM" id="CLU_045192_1_0_0"/>
<dbReference type="Proteomes" id="UP000002193">
    <property type="component" value="Chromosome"/>
</dbReference>
<dbReference type="GO" id="GO:0005737">
    <property type="term" value="C:cytoplasm"/>
    <property type="evidence" value="ECO:0007669"/>
    <property type="project" value="UniProtKB-SubCell"/>
</dbReference>
<dbReference type="GO" id="GO:0008254">
    <property type="term" value="F:3'-nucleotidase activity"/>
    <property type="evidence" value="ECO:0007669"/>
    <property type="project" value="TreeGrafter"/>
</dbReference>
<dbReference type="GO" id="GO:0008253">
    <property type="term" value="F:5'-nucleotidase activity"/>
    <property type="evidence" value="ECO:0007669"/>
    <property type="project" value="UniProtKB-UniRule"/>
</dbReference>
<dbReference type="GO" id="GO:0004309">
    <property type="term" value="F:exopolyphosphatase activity"/>
    <property type="evidence" value="ECO:0007669"/>
    <property type="project" value="TreeGrafter"/>
</dbReference>
<dbReference type="GO" id="GO:0046872">
    <property type="term" value="F:metal ion binding"/>
    <property type="evidence" value="ECO:0007669"/>
    <property type="project" value="UniProtKB-UniRule"/>
</dbReference>
<dbReference type="GO" id="GO:0000166">
    <property type="term" value="F:nucleotide binding"/>
    <property type="evidence" value="ECO:0007669"/>
    <property type="project" value="UniProtKB-KW"/>
</dbReference>
<dbReference type="Gene3D" id="3.40.1210.10">
    <property type="entry name" value="Survival protein SurE-like phosphatase/nucleotidase"/>
    <property type="match status" value="1"/>
</dbReference>
<dbReference type="HAMAP" id="MF_00060">
    <property type="entry name" value="SurE"/>
    <property type="match status" value="1"/>
</dbReference>
<dbReference type="InterPro" id="IPR030048">
    <property type="entry name" value="SurE"/>
</dbReference>
<dbReference type="InterPro" id="IPR002828">
    <property type="entry name" value="SurE-like_Pase/nucleotidase"/>
</dbReference>
<dbReference type="InterPro" id="IPR036523">
    <property type="entry name" value="SurE-like_sf"/>
</dbReference>
<dbReference type="NCBIfam" id="NF001493">
    <property type="entry name" value="PRK00346.2-3"/>
    <property type="match status" value="1"/>
</dbReference>
<dbReference type="NCBIfam" id="TIGR00087">
    <property type="entry name" value="surE"/>
    <property type="match status" value="1"/>
</dbReference>
<dbReference type="PANTHER" id="PTHR30457">
    <property type="entry name" value="5'-NUCLEOTIDASE SURE"/>
    <property type="match status" value="1"/>
</dbReference>
<dbReference type="PANTHER" id="PTHR30457:SF12">
    <property type="entry name" value="5'_3'-NUCLEOTIDASE SURE"/>
    <property type="match status" value="1"/>
</dbReference>
<dbReference type="Pfam" id="PF01975">
    <property type="entry name" value="SurE"/>
    <property type="match status" value="1"/>
</dbReference>
<dbReference type="SUPFAM" id="SSF64167">
    <property type="entry name" value="SurE-like"/>
    <property type="match status" value="1"/>
</dbReference>
<proteinExistence type="inferred from homology"/>
<sequence>MSELSEQCEKRLKILLTNDDGIFAPGMTLLVSNLLKADFADLYIVAPKTEQSAKSMAMTFHEPVILQPYDYPLPVAGAWSVSGTPVDCVRIALAYLFKDELPDLVLSGINRGSNAGRHVFYSGTLGAAIESTLCGVPAVALSQEGNFSFFQEKNFDIPEMLKSLSLYALSLPFAPHPVALNVNFPASNERWKGMRFVTTGPEYSCGVPHFLFCDGDSKIFKLSGGPKIVEEIPSEEWQTLRASYIAVSPVMATTSPLATFSLEEFEQLQVGFYDFANSLGMEN</sequence>